<gene>
    <name evidence="1" type="primary">htpX</name>
    <name type="ordered locus">PM0468</name>
</gene>
<dbReference type="EC" id="3.4.24.-" evidence="1"/>
<dbReference type="EMBL" id="AE004439">
    <property type="protein sequence ID" value="AAK02552.1"/>
    <property type="molecule type" value="Genomic_DNA"/>
</dbReference>
<dbReference type="RefSeq" id="WP_010906664.1">
    <property type="nucleotide sequence ID" value="NC_002663.1"/>
</dbReference>
<dbReference type="SMR" id="P57846"/>
<dbReference type="STRING" id="272843.PM0468"/>
<dbReference type="MEROPS" id="M48.002"/>
<dbReference type="EnsemblBacteria" id="AAK02552">
    <property type="protein sequence ID" value="AAK02552"/>
    <property type="gene ID" value="PM0468"/>
</dbReference>
<dbReference type="KEGG" id="pmu:PM0468"/>
<dbReference type="PATRIC" id="fig|272843.6.peg.481"/>
<dbReference type="HOGENOM" id="CLU_042266_1_0_6"/>
<dbReference type="OrthoDB" id="15218at2"/>
<dbReference type="Proteomes" id="UP000000809">
    <property type="component" value="Chromosome"/>
</dbReference>
<dbReference type="GO" id="GO:0005886">
    <property type="term" value="C:plasma membrane"/>
    <property type="evidence" value="ECO:0007669"/>
    <property type="project" value="UniProtKB-SubCell"/>
</dbReference>
<dbReference type="GO" id="GO:0004222">
    <property type="term" value="F:metalloendopeptidase activity"/>
    <property type="evidence" value="ECO:0007669"/>
    <property type="project" value="UniProtKB-UniRule"/>
</dbReference>
<dbReference type="GO" id="GO:0008270">
    <property type="term" value="F:zinc ion binding"/>
    <property type="evidence" value="ECO:0007669"/>
    <property type="project" value="UniProtKB-UniRule"/>
</dbReference>
<dbReference type="GO" id="GO:0006508">
    <property type="term" value="P:proteolysis"/>
    <property type="evidence" value="ECO:0007669"/>
    <property type="project" value="UniProtKB-KW"/>
</dbReference>
<dbReference type="CDD" id="cd07335">
    <property type="entry name" value="M48B_HtpX_like"/>
    <property type="match status" value="1"/>
</dbReference>
<dbReference type="Gene3D" id="3.30.2010.10">
    <property type="entry name" value="Metalloproteases ('zincins'), catalytic domain"/>
    <property type="match status" value="1"/>
</dbReference>
<dbReference type="HAMAP" id="MF_00188">
    <property type="entry name" value="Pept_M48_protease_HtpX"/>
    <property type="match status" value="1"/>
</dbReference>
<dbReference type="InterPro" id="IPR050083">
    <property type="entry name" value="HtpX_protease"/>
</dbReference>
<dbReference type="InterPro" id="IPR022919">
    <property type="entry name" value="Pept_M48_protease_HtpX"/>
</dbReference>
<dbReference type="InterPro" id="IPR001915">
    <property type="entry name" value="Peptidase_M48"/>
</dbReference>
<dbReference type="NCBIfam" id="NF003965">
    <property type="entry name" value="PRK05457.1"/>
    <property type="match status" value="1"/>
</dbReference>
<dbReference type="PANTHER" id="PTHR43221">
    <property type="entry name" value="PROTEASE HTPX"/>
    <property type="match status" value="1"/>
</dbReference>
<dbReference type="PANTHER" id="PTHR43221:SF1">
    <property type="entry name" value="PROTEASE HTPX"/>
    <property type="match status" value="1"/>
</dbReference>
<dbReference type="Pfam" id="PF01435">
    <property type="entry name" value="Peptidase_M48"/>
    <property type="match status" value="1"/>
</dbReference>
<keyword id="KW-0997">Cell inner membrane</keyword>
<keyword id="KW-1003">Cell membrane</keyword>
<keyword id="KW-0378">Hydrolase</keyword>
<keyword id="KW-0472">Membrane</keyword>
<keyword id="KW-0479">Metal-binding</keyword>
<keyword id="KW-0482">Metalloprotease</keyword>
<keyword id="KW-0645">Protease</keyword>
<keyword id="KW-1185">Reference proteome</keyword>
<keyword id="KW-0812">Transmembrane</keyword>
<keyword id="KW-1133">Transmembrane helix</keyword>
<keyword id="KW-0862">Zinc</keyword>
<organism>
    <name type="scientific">Pasteurella multocida (strain Pm70)</name>
    <dbReference type="NCBI Taxonomy" id="272843"/>
    <lineage>
        <taxon>Bacteria</taxon>
        <taxon>Pseudomonadati</taxon>
        <taxon>Pseudomonadota</taxon>
        <taxon>Gammaproteobacteria</taxon>
        <taxon>Pasteurellales</taxon>
        <taxon>Pasteurellaceae</taxon>
        <taxon>Pasteurella</taxon>
    </lineage>
</organism>
<name>HTPX_PASMU</name>
<accession>P57846</accession>
<comment type="cofactor">
    <cofactor evidence="1">
        <name>Zn(2+)</name>
        <dbReference type="ChEBI" id="CHEBI:29105"/>
    </cofactor>
    <text evidence="1">Binds 1 zinc ion per subunit.</text>
</comment>
<comment type="subcellular location">
    <subcellularLocation>
        <location evidence="1">Cell inner membrane</location>
        <topology evidence="1">Multi-pass membrane protein</topology>
    </subcellularLocation>
</comment>
<comment type="similarity">
    <text evidence="1">Belongs to the peptidase M48B family.</text>
</comment>
<reference key="1">
    <citation type="journal article" date="2001" name="Proc. Natl. Acad. Sci. U.S.A.">
        <title>Complete genomic sequence of Pasteurella multocida Pm70.</title>
        <authorList>
            <person name="May B.J."/>
            <person name="Zhang Q."/>
            <person name="Li L.L."/>
            <person name="Paustian M.L."/>
            <person name="Whittam T.S."/>
            <person name="Kapur V."/>
        </authorList>
    </citation>
    <scope>NUCLEOTIDE SEQUENCE [LARGE SCALE GENOMIC DNA]</scope>
    <source>
        <strain>Pm70</strain>
    </source>
</reference>
<evidence type="ECO:0000255" key="1">
    <source>
        <dbReference type="HAMAP-Rule" id="MF_00188"/>
    </source>
</evidence>
<feature type="chain" id="PRO_0000138879" description="Protease HtpX">
    <location>
        <begin position="1"/>
        <end position="286"/>
    </location>
</feature>
<feature type="transmembrane region" description="Helical" evidence="1">
    <location>
        <begin position="4"/>
        <end position="24"/>
    </location>
</feature>
<feature type="transmembrane region" description="Helical" evidence="1">
    <location>
        <begin position="33"/>
        <end position="53"/>
    </location>
</feature>
<feature type="transmembrane region" description="Helical" evidence="1">
    <location>
        <begin position="147"/>
        <end position="167"/>
    </location>
</feature>
<feature type="transmembrane region" description="Helical" evidence="1">
    <location>
        <begin position="186"/>
        <end position="206"/>
    </location>
</feature>
<feature type="active site" evidence="1">
    <location>
        <position position="140"/>
    </location>
</feature>
<feature type="binding site" evidence="1">
    <location>
        <position position="139"/>
    </location>
    <ligand>
        <name>Zn(2+)</name>
        <dbReference type="ChEBI" id="CHEBI:29105"/>
        <note>catalytic</note>
    </ligand>
</feature>
<feature type="binding site" evidence="1">
    <location>
        <position position="143"/>
    </location>
    <ligand>
        <name>Zn(2+)</name>
        <dbReference type="ChEBI" id="CHEBI:29105"/>
        <note>catalytic</note>
    </ligand>
</feature>
<feature type="binding site" evidence="1">
    <location>
        <position position="214"/>
    </location>
    <ligand>
        <name>Zn(2+)</name>
        <dbReference type="ChEBI" id="CHEBI:29105"/>
        <note>catalytic</note>
    </ligand>
</feature>
<proteinExistence type="inferred from homology"/>
<protein>
    <recommendedName>
        <fullName evidence="1">Protease HtpX</fullName>
        <ecNumber evidence="1">3.4.24.-</ecNumber>
    </recommendedName>
    <alternativeName>
        <fullName evidence="1">Heat shock protein HtpX</fullName>
    </alternativeName>
</protein>
<sequence length="286" mass="31344">MMRILLFLATNMAVLVVFNIILSLTGIQAQDATGLLLMAALFGFSGSLISLFLSKTMALRAVGAEVIKQPRNDMERWLVNTVRSQAERANLPMPDVAIYHSEDVNAFATGPSKNNSLVAVSTGLLRAMTQDEAEAVLAHEVAHIKNGDMVTMTLLQGVLNTFVIFVSRMIAKVVSSNRDGESSTGIYFLVSMVLEILFGFLASMIAMWFSRYREFRADAGSAKLVGKHKMIAALQRLQRLHEPQELEGQLAAFAINGKRGGLAALFMSHPPLEKRIAALQQLDSFK</sequence>